<dbReference type="EMBL" id="CP001129">
    <property type="protein sequence ID" value="ACG62943.1"/>
    <property type="molecule type" value="Genomic_DNA"/>
</dbReference>
<dbReference type="RefSeq" id="WP_012516199.1">
    <property type="nucleotide sequence ID" value="NC_011134.1"/>
</dbReference>
<dbReference type="SMR" id="B4U4M6"/>
<dbReference type="KEGG" id="sez:Sez_1612"/>
<dbReference type="HOGENOM" id="CLU_159890_1_0_9"/>
<dbReference type="Proteomes" id="UP000001873">
    <property type="component" value="Chromosome"/>
</dbReference>
<dbReference type="GO" id="GO:0005737">
    <property type="term" value="C:cytoplasm"/>
    <property type="evidence" value="ECO:0007669"/>
    <property type="project" value="UniProtKB-SubCell"/>
</dbReference>
<dbReference type="HAMAP" id="MF_01126">
    <property type="entry name" value="UPF0298"/>
    <property type="match status" value="1"/>
</dbReference>
<dbReference type="InterPro" id="IPR016979">
    <property type="entry name" value="DUF2129"/>
</dbReference>
<dbReference type="NCBIfam" id="NF002631">
    <property type="entry name" value="PRK02302.1"/>
    <property type="match status" value="1"/>
</dbReference>
<dbReference type="Pfam" id="PF09902">
    <property type="entry name" value="DUF2129"/>
    <property type="match status" value="1"/>
</dbReference>
<dbReference type="PIRSF" id="PIRSF031653">
    <property type="entry name" value="UCP031653"/>
    <property type="match status" value="1"/>
</dbReference>
<evidence type="ECO:0000255" key="1">
    <source>
        <dbReference type="HAMAP-Rule" id="MF_01126"/>
    </source>
</evidence>
<comment type="subcellular location">
    <subcellularLocation>
        <location evidence="1">Cytoplasm</location>
    </subcellularLocation>
</comment>
<comment type="similarity">
    <text evidence="1">Belongs to the UPF0298 family.</text>
</comment>
<feature type="chain" id="PRO_1000137288" description="UPF0298 protein Sez_1612">
    <location>
        <begin position="1"/>
        <end position="94"/>
    </location>
</feature>
<sequence length="94" mass="11339">MFQKQQRIGLVIYLYYNRDARKVMKYGDLYYHSRRSRYLVIYINKEDMEEKLKDISRLTFVKEVKVSAFDDIDCDFVGNLHREPLEPQALPEQG</sequence>
<protein>
    <recommendedName>
        <fullName evidence="1">UPF0298 protein Sez_1612</fullName>
    </recommendedName>
</protein>
<gene>
    <name type="ordered locus">Sez_1612</name>
</gene>
<keyword id="KW-0963">Cytoplasm</keyword>
<name>Y1612_STREM</name>
<accession>B4U4M6</accession>
<reference key="1">
    <citation type="journal article" date="2008" name="PLoS ONE">
        <title>Genome sequence of a lancefield group C Streptococcus zooepidemicus strain causing epidemic nephritis: new information about an old disease.</title>
        <authorList>
            <person name="Beres S.B."/>
            <person name="Sesso R."/>
            <person name="Pinto S.W.L."/>
            <person name="Hoe N.P."/>
            <person name="Porcella S.F."/>
            <person name="Deleo F.R."/>
            <person name="Musser J.M."/>
        </authorList>
    </citation>
    <scope>NUCLEOTIDE SEQUENCE [LARGE SCALE GENOMIC DNA]</scope>
    <source>
        <strain>MGCS10565</strain>
    </source>
</reference>
<proteinExistence type="inferred from homology"/>
<organism>
    <name type="scientific">Streptococcus equi subsp. zooepidemicus (strain MGCS10565)</name>
    <dbReference type="NCBI Taxonomy" id="552526"/>
    <lineage>
        <taxon>Bacteria</taxon>
        <taxon>Bacillati</taxon>
        <taxon>Bacillota</taxon>
        <taxon>Bacilli</taxon>
        <taxon>Lactobacillales</taxon>
        <taxon>Streptococcaceae</taxon>
        <taxon>Streptococcus</taxon>
    </lineage>
</organism>